<gene>
    <name evidence="1" type="primary">rplX</name>
    <name type="ordered locus">Atu1935</name>
    <name type="ORF">AGR_C_3538</name>
</gene>
<evidence type="ECO:0000255" key="1">
    <source>
        <dbReference type="HAMAP-Rule" id="MF_01326"/>
    </source>
</evidence>
<evidence type="ECO:0000305" key="2"/>
<feature type="chain" id="PRO_0000130615" description="Large ribosomal subunit protein uL24">
    <location>
        <begin position="1"/>
        <end position="102"/>
    </location>
</feature>
<proteinExistence type="inferred from homology"/>
<comment type="function">
    <text evidence="1">One of two assembly initiator proteins, it binds directly to the 5'-end of the 23S rRNA, where it nucleates assembly of the 50S subunit.</text>
</comment>
<comment type="function">
    <text evidence="1">One of the proteins that surrounds the polypeptide exit tunnel on the outside of the subunit.</text>
</comment>
<comment type="subunit">
    <text evidence="1">Part of the 50S ribosomal subunit.</text>
</comment>
<comment type="similarity">
    <text evidence="1">Belongs to the universal ribosomal protein uL24 family.</text>
</comment>
<protein>
    <recommendedName>
        <fullName evidence="1">Large ribosomal subunit protein uL24</fullName>
    </recommendedName>
    <alternativeName>
        <fullName evidence="2">50S ribosomal protein L24</fullName>
    </alternativeName>
</protein>
<sequence length="102" mass="11172">MQKIRKGDNVVVLTGKDKGRTGEVIQVMPKEDRAVVRGVNMVKRHQRQTQAQEAGIINKEASLHISNIAIVDKDGKPTRVGFSVVDGKKVRVAKRSGEVIDG</sequence>
<organism>
    <name type="scientific">Agrobacterium fabrum (strain C58 / ATCC 33970)</name>
    <name type="common">Agrobacterium tumefaciens (strain C58)</name>
    <dbReference type="NCBI Taxonomy" id="176299"/>
    <lineage>
        <taxon>Bacteria</taxon>
        <taxon>Pseudomonadati</taxon>
        <taxon>Pseudomonadota</taxon>
        <taxon>Alphaproteobacteria</taxon>
        <taxon>Hyphomicrobiales</taxon>
        <taxon>Rhizobiaceae</taxon>
        <taxon>Rhizobium/Agrobacterium group</taxon>
        <taxon>Agrobacterium</taxon>
        <taxon>Agrobacterium tumefaciens complex</taxon>
    </lineage>
</organism>
<dbReference type="EMBL" id="AE007869">
    <property type="protein sequence ID" value="AAK87698.1"/>
    <property type="molecule type" value="Genomic_DNA"/>
</dbReference>
<dbReference type="PIR" id="A97593">
    <property type="entry name" value="A97593"/>
</dbReference>
<dbReference type="PIR" id="AE2814">
    <property type="entry name" value="AE2814"/>
</dbReference>
<dbReference type="RefSeq" id="NP_354913.1">
    <property type="nucleotide sequence ID" value="NC_003062.2"/>
</dbReference>
<dbReference type="RefSeq" id="WP_006313975.1">
    <property type="nucleotide sequence ID" value="NC_003062.2"/>
</dbReference>
<dbReference type="SMR" id="Q8UE29"/>
<dbReference type="STRING" id="176299.Atu1935"/>
<dbReference type="EnsemblBacteria" id="AAK87698">
    <property type="protein sequence ID" value="AAK87698"/>
    <property type="gene ID" value="Atu1935"/>
</dbReference>
<dbReference type="GeneID" id="1133973"/>
<dbReference type="KEGG" id="atu:Atu1935"/>
<dbReference type="PATRIC" id="fig|176299.10.peg.1947"/>
<dbReference type="eggNOG" id="COG0198">
    <property type="taxonomic scope" value="Bacteria"/>
</dbReference>
<dbReference type="HOGENOM" id="CLU_093315_2_2_5"/>
<dbReference type="OrthoDB" id="9807419at2"/>
<dbReference type="PhylomeDB" id="Q8UE29"/>
<dbReference type="BioCyc" id="AGRO:ATU1935-MONOMER"/>
<dbReference type="Proteomes" id="UP000000813">
    <property type="component" value="Chromosome circular"/>
</dbReference>
<dbReference type="GO" id="GO:1990904">
    <property type="term" value="C:ribonucleoprotein complex"/>
    <property type="evidence" value="ECO:0007669"/>
    <property type="project" value="UniProtKB-KW"/>
</dbReference>
<dbReference type="GO" id="GO:0005840">
    <property type="term" value="C:ribosome"/>
    <property type="evidence" value="ECO:0007669"/>
    <property type="project" value="UniProtKB-KW"/>
</dbReference>
<dbReference type="GO" id="GO:0019843">
    <property type="term" value="F:rRNA binding"/>
    <property type="evidence" value="ECO:0007669"/>
    <property type="project" value="UniProtKB-UniRule"/>
</dbReference>
<dbReference type="GO" id="GO:0003735">
    <property type="term" value="F:structural constituent of ribosome"/>
    <property type="evidence" value="ECO:0007669"/>
    <property type="project" value="InterPro"/>
</dbReference>
<dbReference type="GO" id="GO:0006412">
    <property type="term" value="P:translation"/>
    <property type="evidence" value="ECO:0007669"/>
    <property type="project" value="UniProtKB-UniRule"/>
</dbReference>
<dbReference type="CDD" id="cd06089">
    <property type="entry name" value="KOW_RPL26"/>
    <property type="match status" value="1"/>
</dbReference>
<dbReference type="FunFam" id="2.30.30.30:FF:000004">
    <property type="entry name" value="50S ribosomal protein L24"/>
    <property type="match status" value="1"/>
</dbReference>
<dbReference type="Gene3D" id="2.30.30.30">
    <property type="match status" value="1"/>
</dbReference>
<dbReference type="HAMAP" id="MF_01326_B">
    <property type="entry name" value="Ribosomal_uL24_B"/>
    <property type="match status" value="1"/>
</dbReference>
<dbReference type="InterPro" id="IPR005824">
    <property type="entry name" value="KOW"/>
</dbReference>
<dbReference type="InterPro" id="IPR014722">
    <property type="entry name" value="Rib_uL2_dom2"/>
</dbReference>
<dbReference type="InterPro" id="IPR003256">
    <property type="entry name" value="Ribosomal_uL24"/>
</dbReference>
<dbReference type="InterPro" id="IPR005825">
    <property type="entry name" value="Ribosomal_uL24_CS"/>
</dbReference>
<dbReference type="InterPro" id="IPR041988">
    <property type="entry name" value="Ribosomal_uL24_KOW"/>
</dbReference>
<dbReference type="InterPro" id="IPR008991">
    <property type="entry name" value="Translation_prot_SH3-like_sf"/>
</dbReference>
<dbReference type="NCBIfam" id="TIGR01079">
    <property type="entry name" value="rplX_bact"/>
    <property type="match status" value="1"/>
</dbReference>
<dbReference type="PANTHER" id="PTHR12903">
    <property type="entry name" value="MITOCHONDRIAL RIBOSOMAL PROTEIN L24"/>
    <property type="match status" value="1"/>
</dbReference>
<dbReference type="Pfam" id="PF00467">
    <property type="entry name" value="KOW"/>
    <property type="match status" value="1"/>
</dbReference>
<dbReference type="Pfam" id="PF17136">
    <property type="entry name" value="ribosomal_L24"/>
    <property type="match status" value="1"/>
</dbReference>
<dbReference type="SMART" id="SM00739">
    <property type="entry name" value="KOW"/>
    <property type="match status" value="1"/>
</dbReference>
<dbReference type="SUPFAM" id="SSF50104">
    <property type="entry name" value="Translation proteins SH3-like domain"/>
    <property type="match status" value="1"/>
</dbReference>
<dbReference type="PROSITE" id="PS01108">
    <property type="entry name" value="RIBOSOMAL_L24"/>
    <property type="match status" value="1"/>
</dbReference>
<accession>Q8UE29</accession>
<reference key="1">
    <citation type="journal article" date="2001" name="Science">
        <title>The genome of the natural genetic engineer Agrobacterium tumefaciens C58.</title>
        <authorList>
            <person name="Wood D.W."/>
            <person name="Setubal J.C."/>
            <person name="Kaul R."/>
            <person name="Monks D.E."/>
            <person name="Kitajima J.P."/>
            <person name="Okura V.K."/>
            <person name="Zhou Y."/>
            <person name="Chen L."/>
            <person name="Wood G.E."/>
            <person name="Almeida N.F. Jr."/>
            <person name="Woo L."/>
            <person name="Chen Y."/>
            <person name="Paulsen I.T."/>
            <person name="Eisen J.A."/>
            <person name="Karp P.D."/>
            <person name="Bovee D. Sr."/>
            <person name="Chapman P."/>
            <person name="Clendenning J."/>
            <person name="Deatherage G."/>
            <person name="Gillet W."/>
            <person name="Grant C."/>
            <person name="Kutyavin T."/>
            <person name="Levy R."/>
            <person name="Li M.-J."/>
            <person name="McClelland E."/>
            <person name="Palmieri A."/>
            <person name="Raymond C."/>
            <person name="Rouse G."/>
            <person name="Saenphimmachak C."/>
            <person name="Wu Z."/>
            <person name="Romero P."/>
            <person name="Gordon D."/>
            <person name="Zhang S."/>
            <person name="Yoo H."/>
            <person name="Tao Y."/>
            <person name="Biddle P."/>
            <person name="Jung M."/>
            <person name="Krespan W."/>
            <person name="Perry M."/>
            <person name="Gordon-Kamm B."/>
            <person name="Liao L."/>
            <person name="Kim S."/>
            <person name="Hendrick C."/>
            <person name="Zhao Z.-Y."/>
            <person name="Dolan M."/>
            <person name="Chumley F."/>
            <person name="Tingey S.V."/>
            <person name="Tomb J.-F."/>
            <person name="Gordon M.P."/>
            <person name="Olson M.V."/>
            <person name="Nester E.W."/>
        </authorList>
    </citation>
    <scope>NUCLEOTIDE SEQUENCE [LARGE SCALE GENOMIC DNA]</scope>
    <source>
        <strain>C58 / ATCC 33970</strain>
    </source>
</reference>
<reference key="2">
    <citation type="journal article" date="2001" name="Science">
        <title>Genome sequence of the plant pathogen and biotechnology agent Agrobacterium tumefaciens C58.</title>
        <authorList>
            <person name="Goodner B."/>
            <person name="Hinkle G."/>
            <person name="Gattung S."/>
            <person name="Miller N."/>
            <person name="Blanchard M."/>
            <person name="Qurollo B."/>
            <person name="Goldman B.S."/>
            <person name="Cao Y."/>
            <person name="Askenazi M."/>
            <person name="Halling C."/>
            <person name="Mullin L."/>
            <person name="Houmiel K."/>
            <person name="Gordon J."/>
            <person name="Vaudin M."/>
            <person name="Iartchouk O."/>
            <person name="Epp A."/>
            <person name="Liu F."/>
            <person name="Wollam C."/>
            <person name="Allinger M."/>
            <person name="Doughty D."/>
            <person name="Scott C."/>
            <person name="Lappas C."/>
            <person name="Markelz B."/>
            <person name="Flanagan C."/>
            <person name="Crowell C."/>
            <person name="Gurson J."/>
            <person name="Lomo C."/>
            <person name="Sear C."/>
            <person name="Strub G."/>
            <person name="Cielo C."/>
            <person name="Slater S."/>
        </authorList>
    </citation>
    <scope>NUCLEOTIDE SEQUENCE [LARGE SCALE GENOMIC DNA]</scope>
    <source>
        <strain>C58 / ATCC 33970</strain>
    </source>
</reference>
<name>RL24_AGRFC</name>
<keyword id="KW-1185">Reference proteome</keyword>
<keyword id="KW-0687">Ribonucleoprotein</keyword>
<keyword id="KW-0689">Ribosomal protein</keyword>
<keyword id="KW-0694">RNA-binding</keyword>
<keyword id="KW-0699">rRNA-binding</keyword>